<organism>
    <name type="scientific">Lachnoclostridium phytofermentans (strain ATCC 700394 / DSM 18823 / ISDg)</name>
    <name type="common">Clostridium phytofermentans</name>
    <dbReference type="NCBI Taxonomy" id="357809"/>
    <lineage>
        <taxon>Bacteria</taxon>
        <taxon>Bacillati</taxon>
        <taxon>Bacillota</taxon>
        <taxon>Clostridia</taxon>
        <taxon>Lachnospirales</taxon>
        <taxon>Lachnospiraceae</taxon>
    </lineage>
</organism>
<reference key="1">
    <citation type="submission" date="2007-11" db="EMBL/GenBank/DDBJ databases">
        <title>Complete genome sequence of Clostridium phytofermentans ISDg.</title>
        <authorList>
            <person name="Leschine S.B."/>
            <person name="Warnick T.A."/>
            <person name="Blanchard J.L."/>
            <person name="Schnell D.J."/>
            <person name="Petit E.L."/>
            <person name="LaTouf W.G."/>
            <person name="Copeland A."/>
            <person name="Lucas S."/>
            <person name="Lapidus A."/>
            <person name="Barry K."/>
            <person name="Glavina del Rio T."/>
            <person name="Dalin E."/>
            <person name="Tice H."/>
            <person name="Pitluck S."/>
            <person name="Kiss H."/>
            <person name="Brettin T."/>
            <person name="Bruce D."/>
            <person name="Detter J.C."/>
            <person name="Han C."/>
            <person name="Kuske C."/>
            <person name="Schmutz J."/>
            <person name="Larimer F."/>
            <person name="Land M."/>
            <person name="Hauser L."/>
            <person name="Kyrpides N."/>
            <person name="Kim E.A."/>
            <person name="Richardson P."/>
        </authorList>
    </citation>
    <scope>NUCLEOTIDE SEQUENCE [LARGE SCALE GENOMIC DNA]</scope>
    <source>
        <strain>ATCC 700394 / DSM 18823 / ISDg</strain>
    </source>
</reference>
<accession>A9KP30</accession>
<feature type="chain" id="PRO_1000084055" description="Imidazole glycerol phosphate synthase subunit HisF">
    <location>
        <begin position="1"/>
        <end position="258"/>
    </location>
</feature>
<feature type="active site" evidence="1">
    <location>
        <position position="11"/>
    </location>
</feature>
<feature type="active site" evidence="1">
    <location>
        <position position="130"/>
    </location>
</feature>
<name>HIS6_LACP7</name>
<evidence type="ECO:0000255" key="1">
    <source>
        <dbReference type="HAMAP-Rule" id="MF_01013"/>
    </source>
</evidence>
<gene>
    <name evidence="1" type="primary">hisF</name>
    <name type="ordered locus">Cphy_2840</name>
</gene>
<comment type="function">
    <text evidence="1">IGPS catalyzes the conversion of PRFAR and glutamine to IGP, AICAR and glutamate. The HisF subunit catalyzes the cyclization activity that produces IGP and AICAR from PRFAR using the ammonia provided by the HisH subunit.</text>
</comment>
<comment type="catalytic activity">
    <reaction evidence="1">
        <text>5-[(5-phospho-1-deoxy-D-ribulos-1-ylimino)methylamino]-1-(5-phospho-beta-D-ribosyl)imidazole-4-carboxamide + L-glutamine = D-erythro-1-(imidazol-4-yl)glycerol 3-phosphate + 5-amino-1-(5-phospho-beta-D-ribosyl)imidazole-4-carboxamide + L-glutamate + H(+)</text>
        <dbReference type="Rhea" id="RHEA:24793"/>
        <dbReference type="ChEBI" id="CHEBI:15378"/>
        <dbReference type="ChEBI" id="CHEBI:29985"/>
        <dbReference type="ChEBI" id="CHEBI:58278"/>
        <dbReference type="ChEBI" id="CHEBI:58359"/>
        <dbReference type="ChEBI" id="CHEBI:58475"/>
        <dbReference type="ChEBI" id="CHEBI:58525"/>
        <dbReference type="EC" id="4.3.2.10"/>
    </reaction>
</comment>
<comment type="pathway">
    <text evidence="1">Amino-acid biosynthesis; L-histidine biosynthesis; L-histidine from 5-phospho-alpha-D-ribose 1-diphosphate: step 5/9.</text>
</comment>
<comment type="subunit">
    <text evidence="1">Heterodimer of HisH and HisF.</text>
</comment>
<comment type="subcellular location">
    <subcellularLocation>
        <location evidence="1">Cytoplasm</location>
    </subcellularLocation>
</comment>
<comment type="similarity">
    <text evidence="1">Belongs to the HisA/HisF family.</text>
</comment>
<proteinExistence type="inferred from homology"/>
<keyword id="KW-0028">Amino-acid biosynthesis</keyword>
<keyword id="KW-0963">Cytoplasm</keyword>
<keyword id="KW-0368">Histidine biosynthesis</keyword>
<keyword id="KW-0456">Lyase</keyword>
<keyword id="KW-1185">Reference proteome</keyword>
<sequence>MHTKRIIPCLDVHNGRVVKGTNFLNLRDAGDPVLVGAEYGQAGADELVFLDITASSDARTIKLDMVRKVAETVFIPFTVGGGIRSIEDFKLILREGADKIAVNTAAIMNPTLISEAADKFGSQCVVVAIDAKCRPDNSGWNIYKNGGRIDMGIDAVEWAMKANELGAGEILLTSMDCDGTKNGYDLELTKQISENVSIPVIASGGAGTKEHFYEALTRGKADAVLAASLFHYKELEINDLKEYLRMKEVSVRLEDRSC</sequence>
<dbReference type="EC" id="4.3.2.10" evidence="1"/>
<dbReference type="EMBL" id="CP000885">
    <property type="protein sequence ID" value="ABX43200.1"/>
    <property type="molecule type" value="Genomic_DNA"/>
</dbReference>
<dbReference type="RefSeq" id="WP_012200851.1">
    <property type="nucleotide sequence ID" value="NC_010001.1"/>
</dbReference>
<dbReference type="SMR" id="A9KP30"/>
<dbReference type="STRING" id="357809.Cphy_2840"/>
<dbReference type="KEGG" id="cpy:Cphy_2840"/>
<dbReference type="eggNOG" id="COG0107">
    <property type="taxonomic scope" value="Bacteria"/>
</dbReference>
<dbReference type="HOGENOM" id="CLU_048577_4_0_9"/>
<dbReference type="OrthoDB" id="9781903at2"/>
<dbReference type="UniPathway" id="UPA00031">
    <property type="reaction ID" value="UER00010"/>
</dbReference>
<dbReference type="Proteomes" id="UP000000370">
    <property type="component" value="Chromosome"/>
</dbReference>
<dbReference type="GO" id="GO:0005737">
    <property type="term" value="C:cytoplasm"/>
    <property type="evidence" value="ECO:0007669"/>
    <property type="project" value="UniProtKB-SubCell"/>
</dbReference>
<dbReference type="GO" id="GO:0000107">
    <property type="term" value="F:imidazoleglycerol-phosphate synthase activity"/>
    <property type="evidence" value="ECO:0007669"/>
    <property type="project" value="UniProtKB-UniRule"/>
</dbReference>
<dbReference type="GO" id="GO:0016829">
    <property type="term" value="F:lyase activity"/>
    <property type="evidence" value="ECO:0007669"/>
    <property type="project" value="UniProtKB-KW"/>
</dbReference>
<dbReference type="GO" id="GO:0000105">
    <property type="term" value="P:L-histidine biosynthetic process"/>
    <property type="evidence" value="ECO:0007669"/>
    <property type="project" value="UniProtKB-UniRule"/>
</dbReference>
<dbReference type="CDD" id="cd04731">
    <property type="entry name" value="HisF"/>
    <property type="match status" value="1"/>
</dbReference>
<dbReference type="FunFam" id="3.20.20.70:FF:000006">
    <property type="entry name" value="Imidazole glycerol phosphate synthase subunit HisF"/>
    <property type="match status" value="1"/>
</dbReference>
<dbReference type="Gene3D" id="3.20.20.70">
    <property type="entry name" value="Aldolase class I"/>
    <property type="match status" value="1"/>
</dbReference>
<dbReference type="HAMAP" id="MF_01013">
    <property type="entry name" value="HisF"/>
    <property type="match status" value="1"/>
</dbReference>
<dbReference type="InterPro" id="IPR013785">
    <property type="entry name" value="Aldolase_TIM"/>
</dbReference>
<dbReference type="InterPro" id="IPR006062">
    <property type="entry name" value="His_biosynth"/>
</dbReference>
<dbReference type="InterPro" id="IPR004651">
    <property type="entry name" value="HisF"/>
</dbReference>
<dbReference type="InterPro" id="IPR050064">
    <property type="entry name" value="IGPS_HisA/HisF"/>
</dbReference>
<dbReference type="InterPro" id="IPR011060">
    <property type="entry name" value="RibuloseP-bd_barrel"/>
</dbReference>
<dbReference type="NCBIfam" id="TIGR00735">
    <property type="entry name" value="hisF"/>
    <property type="match status" value="1"/>
</dbReference>
<dbReference type="PANTHER" id="PTHR21235:SF2">
    <property type="entry name" value="IMIDAZOLE GLYCEROL PHOSPHATE SYNTHASE HISHF"/>
    <property type="match status" value="1"/>
</dbReference>
<dbReference type="PANTHER" id="PTHR21235">
    <property type="entry name" value="IMIDAZOLE GLYCEROL PHOSPHATE SYNTHASE SUBUNIT HISF/H IGP SYNTHASE SUBUNIT HISF/H"/>
    <property type="match status" value="1"/>
</dbReference>
<dbReference type="Pfam" id="PF00977">
    <property type="entry name" value="His_biosynth"/>
    <property type="match status" value="1"/>
</dbReference>
<dbReference type="SUPFAM" id="SSF51366">
    <property type="entry name" value="Ribulose-phoshate binding barrel"/>
    <property type="match status" value="1"/>
</dbReference>
<protein>
    <recommendedName>
        <fullName evidence="1">Imidazole glycerol phosphate synthase subunit HisF</fullName>
        <ecNumber evidence="1">4.3.2.10</ecNumber>
    </recommendedName>
    <alternativeName>
        <fullName evidence="1">IGP synthase cyclase subunit</fullName>
    </alternativeName>
    <alternativeName>
        <fullName evidence="1">IGP synthase subunit HisF</fullName>
    </alternativeName>
    <alternativeName>
        <fullName evidence="1">ImGP synthase subunit HisF</fullName>
        <shortName evidence="1">IGPS subunit HisF</shortName>
    </alternativeName>
</protein>